<proteinExistence type="inferred from homology"/>
<gene>
    <name evidence="1" type="primary">guaA</name>
    <name type="ordered locus">STY2751</name>
    <name type="ordered locus">t0347</name>
</gene>
<protein>
    <recommendedName>
        <fullName evidence="1">GMP synthase [glutamine-hydrolyzing]</fullName>
        <ecNumber evidence="1">6.3.5.2</ecNumber>
    </recommendedName>
    <alternativeName>
        <fullName evidence="1">GMP synthetase</fullName>
    </alternativeName>
    <alternativeName>
        <fullName evidence="1">Glutamine amidotransferase</fullName>
    </alternativeName>
</protein>
<sequence length="525" mass="58686">MTENIHKHRILILDFGSQYTQLVARRVRELGVYCELWAWDVTEAQIRDFNPSGIILSGGPESTTEENSPRAPQYVFEAGVPVFGVCYGMQTMAMQLGGHVEGSNEREFGYAQVEVLTDSALVRGIEDSLTADGKPLLDVWMSHGDKVTAIPSDFVTVASTESCPFAIMANEEKRFYGVQFHPEVTHTRQGMRMLERFVRDICQCEALWTPAKIIDDAVARIREQVGDDKVILGLSGGVDSSVTAMLLHRAIGKNLTCVFVDNGLLRLNEAEQVMDMFGDHFGLNIVHVPAEDRFLSALAGENDPEAKRKIIGRVFVEVFDEEALKLEDVKWLAQGTIYPDVIESAASATGKAHVIKSHHNVGGLPKEMKMGLVEPLKELFKDEVRKIGLELGLPYDMLYRHPFPGPGLGVRVLGEVKKEYCDLLRRADAIFIEELRKADLYDKVSQAFTVFLPVRSVGVMGDGRKYDWVVSLRAVETIDFMTAHWAHLPYDFLGRVSNRIINEVNGISRVVYDISGKPPATIEWE</sequence>
<feature type="chain" id="PRO_0000140170" description="GMP synthase [glutamine-hydrolyzing]">
    <location>
        <begin position="1"/>
        <end position="525"/>
    </location>
</feature>
<feature type="domain" description="Glutamine amidotransferase type-1" evidence="1">
    <location>
        <begin position="9"/>
        <end position="207"/>
    </location>
</feature>
<feature type="domain" description="GMPS ATP-PPase" evidence="1">
    <location>
        <begin position="208"/>
        <end position="400"/>
    </location>
</feature>
<feature type="active site" description="Nucleophile" evidence="1">
    <location>
        <position position="86"/>
    </location>
</feature>
<feature type="active site" evidence="1">
    <location>
        <position position="181"/>
    </location>
</feature>
<feature type="active site" evidence="1">
    <location>
        <position position="183"/>
    </location>
</feature>
<feature type="binding site" evidence="1">
    <location>
        <begin position="235"/>
        <end position="241"/>
    </location>
    <ligand>
        <name>ATP</name>
        <dbReference type="ChEBI" id="CHEBI:30616"/>
    </ligand>
</feature>
<organism>
    <name type="scientific">Salmonella typhi</name>
    <dbReference type="NCBI Taxonomy" id="90370"/>
    <lineage>
        <taxon>Bacteria</taxon>
        <taxon>Pseudomonadati</taxon>
        <taxon>Pseudomonadota</taxon>
        <taxon>Gammaproteobacteria</taxon>
        <taxon>Enterobacterales</taxon>
        <taxon>Enterobacteriaceae</taxon>
        <taxon>Salmonella</taxon>
    </lineage>
</organism>
<accession>Q8Z4Q3</accession>
<reference key="1">
    <citation type="journal article" date="2001" name="Nature">
        <title>Complete genome sequence of a multiple drug resistant Salmonella enterica serovar Typhi CT18.</title>
        <authorList>
            <person name="Parkhill J."/>
            <person name="Dougan G."/>
            <person name="James K.D."/>
            <person name="Thomson N.R."/>
            <person name="Pickard D."/>
            <person name="Wain J."/>
            <person name="Churcher C.M."/>
            <person name="Mungall K.L."/>
            <person name="Bentley S.D."/>
            <person name="Holden M.T.G."/>
            <person name="Sebaihia M."/>
            <person name="Baker S."/>
            <person name="Basham D."/>
            <person name="Brooks K."/>
            <person name="Chillingworth T."/>
            <person name="Connerton P."/>
            <person name="Cronin A."/>
            <person name="Davis P."/>
            <person name="Davies R.M."/>
            <person name="Dowd L."/>
            <person name="White N."/>
            <person name="Farrar J."/>
            <person name="Feltwell T."/>
            <person name="Hamlin N."/>
            <person name="Haque A."/>
            <person name="Hien T.T."/>
            <person name="Holroyd S."/>
            <person name="Jagels K."/>
            <person name="Krogh A."/>
            <person name="Larsen T.S."/>
            <person name="Leather S."/>
            <person name="Moule S."/>
            <person name="O'Gaora P."/>
            <person name="Parry C."/>
            <person name="Quail M.A."/>
            <person name="Rutherford K.M."/>
            <person name="Simmonds M."/>
            <person name="Skelton J."/>
            <person name="Stevens K."/>
            <person name="Whitehead S."/>
            <person name="Barrell B.G."/>
        </authorList>
    </citation>
    <scope>NUCLEOTIDE SEQUENCE [LARGE SCALE GENOMIC DNA]</scope>
    <source>
        <strain>CT18</strain>
    </source>
</reference>
<reference key="2">
    <citation type="journal article" date="2003" name="J. Bacteriol.">
        <title>Comparative genomics of Salmonella enterica serovar Typhi strains Ty2 and CT18.</title>
        <authorList>
            <person name="Deng W."/>
            <person name="Liou S.-R."/>
            <person name="Plunkett G. III"/>
            <person name="Mayhew G.F."/>
            <person name="Rose D.J."/>
            <person name="Burland V."/>
            <person name="Kodoyianni V."/>
            <person name="Schwartz D.C."/>
            <person name="Blattner F.R."/>
        </authorList>
    </citation>
    <scope>NUCLEOTIDE SEQUENCE [LARGE SCALE GENOMIC DNA]</scope>
    <source>
        <strain>ATCC 700931 / Ty2</strain>
    </source>
</reference>
<keyword id="KW-0067">ATP-binding</keyword>
<keyword id="KW-0315">Glutamine amidotransferase</keyword>
<keyword id="KW-0332">GMP biosynthesis</keyword>
<keyword id="KW-0436">Ligase</keyword>
<keyword id="KW-0547">Nucleotide-binding</keyword>
<keyword id="KW-0658">Purine biosynthesis</keyword>
<comment type="function">
    <text evidence="1">Catalyzes the synthesis of GMP from XMP.</text>
</comment>
<comment type="catalytic activity">
    <reaction evidence="1">
        <text>XMP + L-glutamine + ATP + H2O = GMP + L-glutamate + AMP + diphosphate + 2 H(+)</text>
        <dbReference type="Rhea" id="RHEA:11680"/>
        <dbReference type="ChEBI" id="CHEBI:15377"/>
        <dbReference type="ChEBI" id="CHEBI:15378"/>
        <dbReference type="ChEBI" id="CHEBI:29985"/>
        <dbReference type="ChEBI" id="CHEBI:30616"/>
        <dbReference type="ChEBI" id="CHEBI:33019"/>
        <dbReference type="ChEBI" id="CHEBI:57464"/>
        <dbReference type="ChEBI" id="CHEBI:58115"/>
        <dbReference type="ChEBI" id="CHEBI:58359"/>
        <dbReference type="ChEBI" id="CHEBI:456215"/>
        <dbReference type="EC" id="6.3.5.2"/>
    </reaction>
</comment>
<comment type="pathway">
    <text evidence="1">Purine metabolism; GMP biosynthesis; GMP from XMP (L-Gln route): step 1/1.</text>
</comment>
<comment type="subunit">
    <text evidence="1">Homodimer.</text>
</comment>
<evidence type="ECO:0000255" key="1">
    <source>
        <dbReference type="HAMAP-Rule" id="MF_00344"/>
    </source>
</evidence>
<dbReference type="EC" id="6.3.5.2" evidence="1"/>
<dbReference type="EMBL" id="AL513382">
    <property type="protein sequence ID" value="CAD02712.1"/>
    <property type="molecule type" value="Genomic_DNA"/>
</dbReference>
<dbReference type="EMBL" id="AE014613">
    <property type="protein sequence ID" value="AAO68067.1"/>
    <property type="molecule type" value="Genomic_DNA"/>
</dbReference>
<dbReference type="RefSeq" id="NP_457044.1">
    <property type="nucleotide sequence ID" value="NC_003198.1"/>
</dbReference>
<dbReference type="RefSeq" id="WP_000138293.1">
    <property type="nucleotide sequence ID" value="NZ_WSUR01000007.1"/>
</dbReference>
<dbReference type="SMR" id="Q8Z4Q3"/>
<dbReference type="STRING" id="220341.gene:17586646"/>
<dbReference type="KEGG" id="stt:t0347"/>
<dbReference type="KEGG" id="sty:STY2751"/>
<dbReference type="PATRIC" id="fig|220341.7.peg.2790"/>
<dbReference type="eggNOG" id="COG0518">
    <property type="taxonomic scope" value="Bacteria"/>
</dbReference>
<dbReference type="eggNOG" id="COG0519">
    <property type="taxonomic scope" value="Bacteria"/>
</dbReference>
<dbReference type="HOGENOM" id="CLU_014340_0_5_6"/>
<dbReference type="OMA" id="IWQSFAV"/>
<dbReference type="OrthoDB" id="9802219at2"/>
<dbReference type="UniPathway" id="UPA00189">
    <property type="reaction ID" value="UER00296"/>
</dbReference>
<dbReference type="Proteomes" id="UP000000541">
    <property type="component" value="Chromosome"/>
</dbReference>
<dbReference type="Proteomes" id="UP000002670">
    <property type="component" value="Chromosome"/>
</dbReference>
<dbReference type="GO" id="GO:0005829">
    <property type="term" value="C:cytosol"/>
    <property type="evidence" value="ECO:0007669"/>
    <property type="project" value="TreeGrafter"/>
</dbReference>
<dbReference type="GO" id="GO:0005524">
    <property type="term" value="F:ATP binding"/>
    <property type="evidence" value="ECO:0007669"/>
    <property type="project" value="UniProtKB-UniRule"/>
</dbReference>
<dbReference type="GO" id="GO:0003921">
    <property type="term" value="F:GMP synthase activity"/>
    <property type="evidence" value="ECO:0007669"/>
    <property type="project" value="InterPro"/>
</dbReference>
<dbReference type="CDD" id="cd01742">
    <property type="entry name" value="GATase1_GMP_Synthase"/>
    <property type="match status" value="1"/>
</dbReference>
<dbReference type="CDD" id="cd01997">
    <property type="entry name" value="GMP_synthase_C"/>
    <property type="match status" value="1"/>
</dbReference>
<dbReference type="FunFam" id="3.30.300.10:FF:000002">
    <property type="entry name" value="GMP synthase [glutamine-hydrolyzing]"/>
    <property type="match status" value="1"/>
</dbReference>
<dbReference type="FunFam" id="3.40.50.620:FF:000001">
    <property type="entry name" value="GMP synthase [glutamine-hydrolyzing]"/>
    <property type="match status" value="1"/>
</dbReference>
<dbReference type="FunFam" id="3.40.50.880:FF:000001">
    <property type="entry name" value="GMP synthase [glutamine-hydrolyzing]"/>
    <property type="match status" value="1"/>
</dbReference>
<dbReference type="Gene3D" id="3.30.300.10">
    <property type="match status" value="1"/>
</dbReference>
<dbReference type="Gene3D" id="3.40.50.880">
    <property type="match status" value="1"/>
</dbReference>
<dbReference type="Gene3D" id="3.40.50.620">
    <property type="entry name" value="HUPs"/>
    <property type="match status" value="1"/>
</dbReference>
<dbReference type="HAMAP" id="MF_00344">
    <property type="entry name" value="GMP_synthase"/>
    <property type="match status" value="1"/>
</dbReference>
<dbReference type="InterPro" id="IPR029062">
    <property type="entry name" value="Class_I_gatase-like"/>
</dbReference>
<dbReference type="InterPro" id="IPR017926">
    <property type="entry name" value="GATASE"/>
</dbReference>
<dbReference type="InterPro" id="IPR001674">
    <property type="entry name" value="GMP_synth_C"/>
</dbReference>
<dbReference type="InterPro" id="IPR004739">
    <property type="entry name" value="GMP_synth_GATase"/>
</dbReference>
<dbReference type="InterPro" id="IPR022955">
    <property type="entry name" value="GMP_synthase"/>
</dbReference>
<dbReference type="InterPro" id="IPR025777">
    <property type="entry name" value="GMPS_ATP_PPase_dom"/>
</dbReference>
<dbReference type="InterPro" id="IPR022310">
    <property type="entry name" value="NAD/GMP_synthase"/>
</dbReference>
<dbReference type="InterPro" id="IPR014729">
    <property type="entry name" value="Rossmann-like_a/b/a_fold"/>
</dbReference>
<dbReference type="NCBIfam" id="TIGR00884">
    <property type="entry name" value="guaA_Cterm"/>
    <property type="match status" value="1"/>
</dbReference>
<dbReference type="NCBIfam" id="TIGR00888">
    <property type="entry name" value="guaA_Nterm"/>
    <property type="match status" value="1"/>
</dbReference>
<dbReference type="NCBIfam" id="NF000848">
    <property type="entry name" value="PRK00074.1"/>
    <property type="match status" value="1"/>
</dbReference>
<dbReference type="PANTHER" id="PTHR11922:SF2">
    <property type="entry name" value="GMP SYNTHASE [GLUTAMINE-HYDROLYZING]"/>
    <property type="match status" value="1"/>
</dbReference>
<dbReference type="PANTHER" id="PTHR11922">
    <property type="entry name" value="GMP SYNTHASE-RELATED"/>
    <property type="match status" value="1"/>
</dbReference>
<dbReference type="Pfam" id="PF00117">
    <property type="entry name" value="GATase"/>
    <property type="match status" value="1"/>
</dbReference>
<dbReference type="Pfam" id="PF00958">
    <property type="entry name" value="GMP_synt_C"/>
    <property type="match status" value="1"/>
</dbReference>
<dbReference type="Pfam" id="PF02540">
    <property type="entry name" value="NAD_synthase"/>
    <property type="match status" value="1"/>
</dbReference>
<dbReference type="PRINTS" id="PR00097">
    <property type="entry name" value="ANTSNTHASEII"/>
</dbReference>
<dbReference type="PRINTS" id="PR00099">
    <property type="entry name" value="CPSGATASE"/>
</dbReference>
<dbReference type="PRINTS" id="PR00096">
    <property type="entry name" value="GATASE"/>
</dbReference>
<dbReference type="SUPFAM" id="SSF52402">
    <property type="entry name" value="Adenine nucleotide alpha hydrolases-like"/>
    <property type="match status" value="1"/>
</dbReference>
<dbReference type="SUPFAM" id="SSF52317">
    <property type="entry name" value="Class I glutamine amidotransferase-like"/>
    <property type="match status" value="1"/>
</dbReference>
<dbReference type="SUPFAM" id="SSF54810">
    <property type="entry name" value="GMP synthetase C-terminal dimerisation domain"/>
    <property type="match status" value="1"/>
</dbReference>
<dbReference type="PROSITE" id="PS51273">
    <property type="entry name" value="GATASE_TYPE_1"/>
    <property type="match status" value="1"/>
</dbReference>
<dbReference type="PROSITE" id="PS51553">
    <property type="entry name" value="GMPS_ATP_PPASE"/>
    <property type="match status" value="1"/>
</dbReference>
<name>GUAA_SALTI</name>